<evidence type="ECO:0000255" key="1">
    <source>
        <dbReference type="PROSITE-ProRule" id="PRU00042"/>
    </source>
</evidence>
<evidence type="ECO:0000255" key="2">
    <source>
        <dbReference type="PROSITE-ProRule" id="PRU00187"/>
    </source>
</evidence>
<evidence type="ECO:0000256" key="3">
    <source>
        <dbReference type="SAM" id="MobiDB-lite"/>
    </source>
</evidence>
<evidence type="ECO:0000269" key="4">
    <source>
    </source>
</evidence>
<evidence type="ECO:0000305" key="5"/>
<evidence type="ECO:0007744" key="6">
    <source>
    </source>
</evidence>
<evidence type="ECO:0007744" key="7">
    <source>
    </source>
</evidence>
<evidence type="ECO:0007744" key="8">
    <source>
    </source>
</evidence>
<evidence type="ECO:0007744" key="9">
    <source>
    </source>
</evidence>
<evidence type="ECO:0007744" key="10">
    <source>
    </source>
</evidence>
<reference key="1">
    <citation type="submission" date="2003-04" db="EMBL/GenBank/DDBJ databases">
        <title>Cloning and characterization of a human novel znf gene.</title>
        <authorList>
            <person name="Luo K.T."/>
            <person name="Yu L."/>
        </authorList>
    </citation>
    <scope>NUCLEOTIDE SEQUENCE [MRNA] (ISOFORM 1)</scope>
</reference>
<reference key="2">
    <citation type="journal article" date="2004" name="Nat. Genet.">
        <title>Complete sequencing and characterization of 21,243 full-length human cDNAs.</title>
        <authorList>
            <person name="Ota T."/>
            <person name="Suzuki Y."/>
            <person name="Nishikawa T."/>
            <person name="Otsuki T."/>
            <person name="Sugiyama T."/>
            <person name="Irie R."/>
            <person name="Wakamatsu A."/>
            <person name="Hayashi K."/>
            <person name="Sato H."/>
            <person name="Nagai K."/>
            <person name="Kimura K."/>
            <person name="Makita H."/>
            <person name="Sekine M."/>
            <person name="Obayashi M."/>
            <person name="Nishi T."/>
            <person name="Shibahara T."/>
            <person name="Tanaka T."/>
            <person name="Ishii S."/>
            <person name="Yamamoto J."/>
            <person name="Saito K."/>
            <person name="Kawai Y."/>
            <person name="Isono Y."/>
            <person name="Nakamura Y."/>
            <person name="Nagahari K."/>
            <person name="Murakami K."/>
            <person name="Yasuda T."/>
            <person name="Iwayanagi T."/>
            <person name="Wagatsuma M."/>
            <person name="Shiratori A."/>
            <person name="Sudo H."/>
            <person name="Hosoiri T."/>
            <person name="Kaku Y."/>
            <person name="Kodaira H."/>
            <person name="Kondo H."/>
            <person name="Sugawara M."/>
            <person name="Takahashi M."/>
            <person name="Kanda K."/>
            <person name="Yokoi T."/>
            <person name="Furuya T."/>
            <person name="Kikkawa E."/>
            <person name="Omura Y."/>
            <person name="Abe K."/>
            <person name="Kamihara K."/>
            <person name="Katsuta N."/>
            <person name="Sato K."/>
            <person name="Tanikawa M."/>
            <person name="Yamazaki M."/>
            <person name="Ninomiya K."/>
            <person name="Ishibashi T."/>
            <person name="Yamashita H."/>
            <person name="Murakawa K."/>
            <person name="Fujimori K."/>
            <person name="Tanai H."/>
            <person name="Kimata M."/>
            <person name="Watanabe M."/>
            <person name="Hiraoka S."/>
            <person name="Chiba Y."/>
            <person name="Ishida S."/>
            <person name="Ono Y."/>
            <person name="Takiguchi S."/>
            <person name="Watanabe S."/>
            <person name="Yosida M."/>
            <person name="Hotuta T."/>
            <person name="Kusano J."/>
            <person name="Kanehori K."/>
            <person name="Takahashi-Fujii A."/>
            <person name="Hara H."/>
            <person name="Tanase T.-O."/>
            <person name="Nomura Y."/>
            <person name="Togiya S."/>
            <person name="Komai F."/>
            <person name="Hara R."/>
            <person name="Takeuchi K."/>
            <person name="Arita M."/>
            <person name="Imose N."/>
            <person name="Musashino K."/>
            <person name="Yuuki H."/>
            <person name="Oshima A."/>
            <person name="Sasaki N."/>
            <person name="Aotsuka S."/>
            <person name="Yoshikawa Y."/>
            <person name="Matsunawa H."/>
            <person name="Ichihara T."/>
            <person name="Shiohata N."/>
            <person name="Sano S."/>
            <person name="Moriya S."/>
            <person name="Momiyama H."/>
            <person name="Satoh N."/>
            <person name="Takami S."/>
            <person name="Terashima Y."/>
            <person name="Suzuki O."/>
            <person name="Nakagawa S."/>
            <person name="Senoh A."/>
            <person name="Mizoguchi H."/>
            <person name="Goto Y."/>
            <person name="Shimizu F."/>
            <person name="Wakebe H."/>
            <person name="Hishigaki H."/>
            <person name="Watanabe T."/>
            <person name="Sugiyama A."/>
            <person name="Takemoto M."/>
            <person name="Kawakami B."/>
            <person name="Yamazaki M."/>
            <person name="Watanabe K."/>
            <person name="Kumagai A."/>
            <person name="Itakura S."/>
            <person name="Fukuzumi Y."/>
            <person name="Fujimori Y."/>
            <person name="Komiyama M."/>
            <person name="Tashiro H."/>
            <person name="Tanigami A."/>
            <person name="Fujiwara T."/>
            <person name="Ono T."/>
            <person name="Yamada K."/>
            <person name="Fujii Y."/>
            <person name="Ozaki K."/>
            <person name="Hirao M."/>
            <person name="Ohmori Y."/>
            <person name="Kawabata A."/>
            <person name="Hikiji T."/>
            <person name="Kobatake N."/>
            <person name="Inagaki H."/>
            <person name="Ikema Y."/>
            <person name="Okamoto S."/>
            <person name="Okitani R."/>
            <person name="Kawakami T."/>
            <person name="Noguchi S."/>
            <person name="Itoh T."/>
            <person name="Shigeta K."/>
            <person name="Senba T."/>
            <person name="Matsumura K."/>
            <person name="Nakajima Y."/>
            <person name="Mizuno T."/>
            <person name="Morinaga M."/>
            <person name="Sasaki M."/>
            <person name="Togashi T."/>
            <person name="Oyama M."/>
            <person name="Hata H."/>
            <person name="Watanabe M."/>
            <person name="Komatsu T."/>
            <person name="Mizushima-Sugano J."/>
            <person name="Satoh T."/>
            <person name="Shirai Y."/>
            <person name="Takahashi Y."/>
            <person name="Nakagawa K."/>
            <person name="Okumura K."/>
            <person name="Nagase T."/>
            <person name="Nomura N."/>
            <person name="Kikuchi H."/>
            <person name="Masuho Y."/>
            <person name="Yamashita R."/>
            <person name="Nakai K."/>
            <person name="Yada T."/>
            <person name="Nakamura Y."/>
            <person name="Ohara O."/>
            <person name="Isogai T."/>
            <person name="Sugano S."/>
        </authorList>
    </citation>
    <scope>NUCLEOTIDE SEQUENCE [LARGE SCALE MRNA] (ISOFORM 1)</scope>
</reference>
<reference key="3">
    <citation type="journal article" date="2004" name="Genome Res.">
        <title>The status, quality, and expansion of the NIH full-length cDNA project: the Mammalian Gene Collection (MGC).</title>
        <authorList>
            <consortium name="The MGC Project Team"/>
        </authorList>
    </citation>
    <scope>NUCLEOTIDE SEQUENCE [LARGE SCALE MRNA] (ISOFORM 2)</scope>
    <scope>VARIANTS HIS-192 AND HIS-387</scope>
    <source>
        <tissue>Placenta</tissue>
    </source>
</reference>
<reference key="4">
    <citation type="journal article" date="2009" name="Sci. Signal.">
        <title>Quantitative phosphoproteomic analysis of T cell receptor signaling reveals system-wide modulation of protein-protein interactions.</title>
        <authorList>
            <person name="Mayya V."/>
            <person name="Lundgren D.H."/>
            <person name="Hwang S.-I."/>
            <person name="Rezaul K."/>
            <person name="Wu L."/>
            <person name="Eng J.K."/>
            <person name="Rodionov V."/>
            <person name="Han D.K."/>
        </authorList>
    </citation>
    <scope>PHOSPHORYLATION [LARGE SCALE ANALYSIS] AT SER-137</scope>
    <scope>IDENTIFICATION BY MASS SPECTROMETRY [LARGE SCALE ANALYSIS]</scope>
    <source>
        <tissue>Leukemic T-cell</tissue>
    </source>
</reference>
<reference key="5">
    <citation type="journal article" date="2011" name="Sci. Signal.">
        <title>System-wide temporal characterization of the proteome and phosphoproteome of human embryonic stem cell differentiation.</title>
        <authorList>
            <person name="Rigbolt K.T."/>
            <person name="Prokhorova T.A."/>
            <person name="Akimov V."/>
            <person name="Henningsen J."/>
            <person name="Johansen P.T."/>
            <person name="Kratchmarova I."/>
            <person name="Kassem M."/>
            <person name="Mann M."/>
            <person name="Olsen J.V."/>
            <person name="Blagoev B."/>
        </authorList>
    </citation>
    <scope>PHOSPHORYLATION [LARGE SCALE ANALYSIS] AT SER-137</scope>
    <scope>IDENTIFICATION BY MASS SPECTROMETRY [LARGE SCALE ANALYSIS]</scope>
</reference>
<reference key="6">
    <citation type="journal article" date="2013" name="J. Proteome Res.">
        <title>Toward a comprehensive characterization of a human cancer cell phosphoproteome.</title>
        <authorList>
            <person name="Zhou H."/>
            <person name="Di Palma S."/>
            <person name="Preisinger C."/>
            <person name="Peng M."/>
            <person name="Polat A.N."/>
            <person name="Heck A.J."/>
            <person name="Mohammed S."/>
        </authorList>
    </citation>
    <scope>PHOSPHORYLATION [LARGE SCALE ANALYSIS] AT SER-137 AND SER-218</scope>
    <scope>IDENTIFICATION BY MASS SPECTROMETRY [LARGE SCALE ANALYSIS]</scope>
    <source>
        <tissue>Cervix carcinoma</tissue>
        <tissue>Erythroleukemia</tissue>
    </source>
</reference>
<reference key="7">
    <citation type="journal article" date="2014" name="J. Proteomics">
        <title>An enzyme assisted RP-RPLC approach for in-depth analysis of human liver phosphoproteome.</title>
        <authorList>
            <person name="Bian Y."/>
            <person name="Song C."/>
            <person name="Cheng K."/>
            <person name="Dong M."/>
            <person name="Wang F."/>
            <person name="Huang J."/>
            <person name="Sun D."/>
            <person name="Wang L."/>
            <person name="Ye M."/>
            <person name="Zou H."/>
        </authorList>
    </citation>
    <scope>PHOSPHORYLATION [LARGE SCALE ANALYSIS] AT SER-137 AND THR-308</scope>
    <scope>IDENTIFICATION BY MASS SPECTROMETRY [LARGE SCALE ANALYSIS]</scope>
    <source>
        <tissue>Liver</tissue>
    </source>
</reference>
<reference key="8">
    <citation type="journal article" date="2017" name="Nat. Struct. Mol. Biol.">
        <title>Site-specific mapping of the human SUMO proteome reveals co-modification with phosphorylation.</title>
        <authorList>
            <person name="Hendriks I.A."/>
            <person name="Lyon D."/>
            <person name="Young C."/>
            <person name="Jensen L.J."/>
            <person name="Vertegaal A.C."/>
            <person name="Nielsen M.L."/>
        </authorList>
    </citation>
    <scope>SUMOYLATION [LARGE SCALE ANALYSIS] AT LYS-130 AND LYS-330</scope>
    <scope>IDENTIFICATION BY MASS SPECTROMETRY [LARGE SCALE ANALYSIS]</scope>
</reference>
<organism>
    <name type="scientific">Homo sapiens</name>
    <name type="common">Human</name>
    <dbReference type="NCBI Taxonomy" id="9606"/>
    <lineage>
        <taxon>Eukaryota</taxon>
        <taxon>Metazoa</taxon>
        <taxon>Chordata</taxon>
        <taxon>Craniata</taxon>
        <taxon>Vertebrata</taxon>
        <taxon>Euteleostomi</taxon>
        <taxon>Mammalia</taxon>
        <taxon>Eutheria</taxon>
        <taxon>Euarchontoglires</taxon>
        <taxon>Primates</taxon>
        <taxon>Haplorrhini</taxon>
        <taxon>Catarrhini</taxon>
        <taxon>Hominidae</taxon>
        <taxon>Homo</taxon>
    </lineage>
</organism>
<keyword id="KW-0025">Alternative splicing</keyword>
<keyword id="KW-0238">DNA-binding</keyword>
<keyword id="KW-1017">Isopeptide bond</keyword>
<keyword id="KW-0479">Metal-binding</keyword>
<keyword id="KW-0539">Nucleus</keyword>
<keyword id="KW-0597">Phosphoprotein</keyword>
<keyword id="KW-1267">Proteomics identification</keyword>
<keyword id="KW-1185">Reference proteome</keyword>
<keyword id="KW-0677">Repeat</keyword>
<keyword id="KW-0804">Transcription</keyword>
<keyword id="KW-0805">Transcription regulation</keyword>
<keyword id="KW-0832">Ubl conjugation</keyword>
<keyword id="KW-0862">Zinc</keyword>
<keyword id="KW-0863">Zinc-finger</keyword>
<name>ZN446_HUMAN</name>
<sequence>MPSPLGPPCLPVMDPETTLEEPETARLRFRGFCYQEVAGPREALARLRELCCQWLQPEAHSKEQMLEMLVLEQFLGTLPPEIQAWVRGQRPGSPEEAAALVEGLQHDPGQLLGWITAHVLKQEVLPAAQKTEEPLGSPHPSGTVESPGEGPQDTRIEGSVQLSCSVKEEPNVDGQEVAPSSPPLAAQSPEGNHGHQEPASTSFHPPRIQEEWGLLDRSQKELYWDAMLEKYGTVVSLGLPPHQPEAQAQSELGMLLTGTGVCRSLRSGNESEGPPGCPEAQPPQGPGPAAWEGLSGAATPAPTVRPGTPPVPTQPTPAETRLEPAATPRKPYTCEQCGRGFDWKSVFVIHHRTHTSGPGVQSPGLATGESTEKPPQGEVAFPHHPRRSLTGPRSYPCEECGCSFSWKSQLVIHRKSHTGQRRHFCSDCGRAFDWKSQLVIHRKGHRPEVP</sequence>
<gene>
    <name type="primary">ZNF446</name>
    <name type="synonym">ZKSCAN20</name>
</gene>
<proteinExistence type="evidence at protein level"/>
<comment type="function">
    <text>May be involved in transcriptional regulation.</text>
</comment>
<comment type="interaction">
    <interactant intactId="EBI-3925851">
        <id>Q9NWS9</id>
    </interactant>
    <interactant intactId="EBI-10290053">
        <id>Q96JS3</id>
        <label>PGBD1</label>
    </interactant>
    <organismsDiffer>false</organismsDiffer>
    <experiments>6</experiments>
</comment>
<comment type="interaction">
    <interactant intactId="EBI-3925851">
        <id>Q9NWS9</id>
    </interactant>
    <interactant intactId="EBI-749023">
        <id>Q9UNY5</id>
        <label>ZNF232</label>
    </interactant>
    <organismsDiffer>false</organismsDiffer>
    <experiments>4</experiments>
</comment>
<comment type="interaction">
    <interactant intactId="EBI-3925851">
        <id>Q9NWS9</id>
    </interactant>
    <interactant intactId="EBI-707773">
        <id>P17028</id>
        <label>ZNF24</label>
    </interactant>
    <organismsDiffer>false</organismsDiffer>
    <experiments>7</experiments>
</comment>
<comment type="interaction">
    <interactant intactId="EBI-3925851">
        <id>Q9NWS9</id>
    </interactant>
    <interactant intactId="EBI-10213894">
        <id>Q8NF99</id>
        <label>ZNF397</label>
    </interactant>
    <organismsDiffer>false</organismsDiffer>
    <experiments>7</experiments>
</comment>
<comment type="interaction">
    <interactant intactId="EBI-3925851">
        <id>Q9NWS9</id>
    </interactant>
    <interactant intactId="EBI-751531">
        <id>O15535</id>
        <label>ZSCAN9</label>
    </interactant>
    <organismsDiffer>false</organismsDiffer>
    <experiments>4</experiments>
</comment>
<comment type="interaction">
    <interactant intactId="EBI-740232">
        <id>Q9NWS9-2</id>
    </interactant>
    <interactant intactId="EBI-5653378">
        <id>Q15327</id>
        <label>ANKRD1</label>
    </interactant>
    <organismsDiffer>false</organismsDiffer>
    <experiments>6</experiments>
</comment>
<comment type="interaction">
    <interactant intactId="EBI-740232">
        <id>Q9NWS9-2</id>
    </interactant>
    <interactant intactId="EBI-12010594">
        <id>O75909-2</id>
        <label>CCNK</label>
    </interactant>
    <organismsDiffer>false</organismsDiffer>
    <experiments>3</experiments>
</comment>
<comment type="interaction">
    <interactant intactId="EBI-740232">
        <id>Q9NWS9-2</id>
    </interactant>
    <interactant intactId="EBI-1050386">
        <id>P61201</id>
        <label>COPS2</label>
    </interactant>
    <organismsDiffer>false</organismsDiffer>
    <experiments>3</experiments>
</comment>
<comment type="interaction">
    <interactant intactId="EBI-740232">
        <id>Q9NWS9-2</id>
    </interactant>
    <interactant intactId="EBI-3867333">
        <id>A8MQ03</id>
        <label>CYSRT1</label>
    </interactant>
    <organismsDiffer>false</organismsDiffer>
    <experiments>3</experiments>
</comment>
<comment type="interaction">
    <interactant intactId="EBI-740232">
        <id>Q9NWS9-2</id>
    </interactant>
    <interactant intactId="EBI-744366">
        <id>Q96KQ7</id>
        <label>EHMT2</label>
    </interactant>
    <organismsDiffer>false</organismsDiffer>
    <experiments>3</experiments>
</comment>
<comment type="interaction">
    <interactant intactId="EBI-740232">
        <id>Q9NWS9-2</id>
    </interactant>
    <interactant intactId="EBI-852291">
        <id>O60447</id>
        <label>EVI5</label>
    </interactant>
    <organismsDiffer>false</organismsDiffer>
    <experiments>3</experiments>
</comment>
<comment type="interaction">
    <interactant intactId="EBI-740232">
        <id>Q9NWS9-2</id>
    </interactant>
    <interactant intactId="EBI-5773072">
        <id>Q9BZ67</id>
        <label>FRMD8</label>
    </interactant>
    <organismsDiffer>false</organismsDiffer>
    <experiments>3</experiments>
</comment>
<comment type="interaction">
    <interactant intactId="EBI-740232">
        <id>Q9NWS9-2</id>
    </interactant>
    <interactant intactId="EBI-725515">
        <id>O43559</id>
        <label>FRS3</label>
    </interactant>
    <organismsDiffer>false</organismsDiffer>
    <experiments>3</experiments>
</comment>
<comment type="interaction">
    <interactant intactId="EBI-740232">
        <id>Q9NWS9-2</id>
    </interactant>
    <interactant intactId="EBI-5916454">
        <id>A6NEM1</id>
        <label>GOLGA6L9</label>
    </interactant>
    <organismsDiffer>false</organismsDiffer>
    <experiments>3</experiments>
</comment>
<comment type="interaction">
    <interactant intactId="EBI-740232">
        <id>Q9NWS9-2</id>
    </interactant>
    <interactant intactId="EBI-6509505">
        <id>Q0VD86</id>
        <label>INCA1</label>
    </interactant>
    <organismsDiffer>false</organismsDiffer>
    <experiments>3</experiments>
</comment>
<comment type="interaction">
    <interactant intactId="EBI-740232">
        <id>Q9NWS9-2</id>
    </interactant>
    <interactant intactId="EBI-14069005">
        <id>Q9BVG8-5</id>
        <label>KIFC3</label>
    </interactant>
    <organismsDiffer>false</organismsDiffer>
    <experiments>3</experiments>
</comment>
<comment type="interaction">
    <interactant intactId="EBI-740232">
        <id>Q9NWS9-2</id>
    </interactant>
    <interactant intactId="EBI-948001">
        <id>Q15323</id>
        <label>KRT31</label>
    </interactant>
    <organismsDiffer>false</organismsDiffer>
    <experiments>3</experiments>
</comment>
<comment type="interaction">
    <interactant intactId="EBI-740232">
        <id>Q9NWS9-2</id>
    </interactant>
    <interactant intactId="EBI-1047093">
        <id>O76011</id>
        <label>KRT34</label>
    </interactant>
    <organismsDiffer>false</organismsDiffer>
    <experiments>3</experiments>
</comment>
<comment type="interaction">
    <interactant intactId="EBI-740232">
        <id>Q9NWS9-2</id>
    </interactant>
    <interactant intactId="EBI-1058674">
        <id>Q92764</id>
        <label>KRT35</label>
    </interactant>
    <organismsDiffer>false</organismsDiffer>
    <experiments>3</experiments>
</comment>
<comment type="interaction">
    <interactant intactId="EBI-740232">
        <id>Q9NWS9-2</id>
    </interactant>
    <interactant intactId="EBI-10171697">
        <id>Q6A162</id>
        <label>KRT40</label>
    </interactant>
    <organismsDiffer>false</organismsDiffer>
    <experiments>6</experiments>
</comment>
<comment type="interaction">
    <interactant intactId="EBI-740232">
        <id>Q9NWS9-2</id>
    </interactant>
    <interactant intactId="EBI-11959885">
        <id>Q07627</id>
        <label>KRTAP1-1</label>
    </interactant>
    <organismsDiffer>false</organismsDiffer>
    <experiments>3</experiments>
</comment>
<comment type="interaction">
    <interactant intactId="EBI-740232">
        <id>Q9NWS9-2</id>
    </interactant>
    <interactant intactId="EBI-11749135">
        <id>Q8IUG1</id>
        <label>KRTAP1-3</label>
    </interactant>
    <organismsDiffer>false</organismsDiffer>
    <experiments>3</experiments>
</comment>
<comment type="interaction">
    <interactant intactId="EBI-740232">
        <id>Q9NWS9-2</id>
    </interactant>
    <interactant intactId="EBI-9996449">
        <id>Q9BYR8</id>
        <label>KRTAP3-1</label>
    </interactant>
    <organismsDiffer>false</organismsDiffer>
    <experiments>3</experiments>
</comment>
<comment type="interaction">
    <interactant intactId="EBI-740232">
        <id>Q9NWS9-2</id>
    </interactant>
    <interactant intactId="EBI-739832">
        <id>Q8TBB1</id>
        <label>LNX1</label>
    </interactant>
    <organismsDiffer>false</organismsDiffer>
    <experiments>3</experiments>
</comment>
<comment type="interaction">
    <interactant intactId="EBI-740232">
        <id>Q9NWS9-2</id>
    </interactant>
    <interactant intactId="EBI-741037">
        <id>Q9BRK4</id>
        <label>LZTS2</label>
    </interactant>
    <organismsDiffer>false</organismsDiffer>
    <experiments>3</experiments>
</comment>
<comment type="interaction">
    <interactant intactId="EBI-740232">
        <id>Q9NWS9-2</id>
    </interactant>
    <interactant intactId="EBI-746778">
        <id>Q96A72</id>
        <label>MAGOHB</label>
    </interactant>
    <organismsDiffer>false</organismsDiffer>
    <experiments>3</experiments>
</comment>
<comment type="interaction">
    <interactant intactId="EBI-740232">
        <id>Q9NWS9-2</id>
    </interactant>
    <interactant intactId="EBI-724076">
        <id>Q99750</id>
        <label>MDFI</label>
    </interactant>
    <organismsDiffer>false</organismsDiffer>
    <experiments>3</experiments>
</comment>
<comment type="interaction">
    <interactant intactId="EBI-740232">
        <id>Q9NWS9-2</id>
    </interactant>
    <interactant intactId="EBI-945833">
        <id>Q7Z3S9</id>
        <label>NOTCH2NLA</label>
    </interactant>
    <organismsDiffer>false</organismsDiffer>
    <experiments>3</experiments>
</comment>
<comment type="interaction">
    <interactant intactId="EBI-740232">
        <id>Q9NWS9-2</id>
    </interactant>
    <interactant intactId="EBI-22310682">
        <id>P0DPK4</id>
        <label>NOTCH2NLC</label>
    </interactant>
    <organismsDiffer>false</organismsDiffer>
    <experiments>3</experiments>
</comment>
<comment type="interaction">
    <interactant intactId="EBI-740232">
        <id>Q9NWS9-2</id>
    </interactant>
    <interactant intactId="EBI-748974">
        <id>Q96CV9</id>
        <label>OPTN</label>
    </interactant>
    <organismsDiffer>false</organismsDiffer>
    <experiments>3</experiments>
</comment>
<comment type="interaction">
    <interactant intactId="EBI-740232">
        <id>Q9NWS9-2</id>
    </interactant>
    <interactant intactId="EBI-10290053">
        <id>Q96JS3</id>
        <label>PGBD1</label>
    </interactant>
    <organismsDiffer>false</organismsDiffer>
    <experiments>6</experiments>
</comment>
<comment type="interaction">
    <interactant intactId="EBI-740232">
        <id>Q9NWS9-2</id>
    </interactant>
    <interactant intactId="EBI-714158">
        <id>Q13526</id>
        <label>PIN1</label>
    </interactant>
    <organismsDiffer>false</organismsDiffer>
    <experiments>6</experiments>
</comment>
<comment type="interaction">
    <interactant intactId="EBI-740232">
        <id>Q9NWS9-2</id>
    </interactant>
    <interactant intactId="EBI-10829018">
        <id>Q04864-2</id>
        <label>REL</label>
    </interactant>
    <organismsDiffer>false</organismsDiffer>
    <experiments>3</experiments>
</comment>
<comment type="interaction">
    <interactant intactId="EBI-740232">
        <id>Q9NWS9-2</id>
    </interactant>
    <interactant intactId="EBI-745846">
        <id>P57086</id>
        <label>SCAND1</label>
    </interactant>
    <organismsDiffer>false</organismsDiffer>
    <experiments>5</experiments>
</comment>
<comment type="interaction">
    <interactant intactId="EBI-740232">
        <id>Q9NWS9-2</id>
    </interactant>
    <interactant intactId="EBI-12372219">
        <id>O15304-2</id>
        <label>SIVA1</label>
    </interactant>
    <organismsDiffer>false</organismsDiffer>
    <experiments>3</experiments>
</comment>
<comment type="interaction">
    <interactant intactId="EBI-740232">
        <id>Q9NWS9-2</id>
    </interactant>
    <interactant intactId="EBI-740595">
        <id>Q9UMX1</id>
        <label>SUFU</label>
    </interactant>
    <organismsDiffer>false</organismsDiffer>
    <experiments>4</experiments>
</comment>
<comment type="interaction">
    <interactant intactId="EBI-740232">
        <id>Q9NWS9-2</id>
    </interactant>
    <interactant intactId="EBI-529518">
        <id>Q86VP1</id>
        <label>TAX1BP1</label>
    </interactant>
    <organismsDiffer>false</organismsDiffer>
    <experiments>3</experiments>
</comment>
<comment type="interaction">
    <interactant intactId="EBI-740232">
        <id>Q9NWS9-2</id>
    </interactant>
    <interactant intactId="EBI-719493">
        <id>P14373</id>
        <label>TRIM27</label>
    </interactant>
    <organismsDiffer>false</organismsDiffer>
    <experiments>3</experiments>
</comment>
<comment type="interaction">
    <interactant intactId="EBI-740232">
        <id>Q9NWS9-2</id>
    </interactant>
    <interactant intactId="EBI-10180829">
        <id>Q7KZS0</id>
        <label>UBE2I</label>
    </interactant>
    <organismsDiffer>false</organismsDiffer>
    <experiments>3</experiments>
</comment>
<comment type="interaction">
    <interactant intactId="EBI-740232">
        <id>Q9NWS9-2</id>
    </interactant>
    <interactant intactId="EBI-2818641">
        <id>Q969J2</id>
        <label>ZKSCAN4</label>
    </interactant>
    <organismsDiffer>false</organismsDiffer>
    <experiments>9</experiments>
</comment>
<comment type="interaction">
    <interactant intactId="EBI-740232">
        <id>Q9NWS9-2</id>
    </interactant>
    <interactant intactId="EBI-743851">
        <id>Q9P0L1</id>
        <label>ZKSCAN7</label>
    </interactant>
    <organismsDiffer>false</organismsDiffer>
    <experiments>3</experiments>
</comment>
<comment type="interaction">
    <interactant intactId="EBI-740232">
        <id>Q9NWS9-2</id>
    </interactant>
    <interactant intactId="EBI-741694">
        <id>P49910</id>
        <label>ZNF165</label>
    </interactant>
    <organismsDiffer>false</organismsDiffer>
    <experiments>9</experiments>
</comment>
<comment type="interaction">
    <interactant intactId="EBI-740232">
        <id>Q9NWS9-2</id>
    </interactant>
    <interactant intactId="EBI-10186058">
        <id>Q53Z40</id>
        <label>ZNF165</label>
    </interactant>
    <organismsDiffer>false</organismsDiffer>
    <experiments>3</experiments>
</comment>
<comment type="interaction">
    <interactant intactId="EBI-740232">
        <id>Q9NWS9-2</id>
    </interactant>
    <interactant intactId="EBI-8648067">
        <id>P17022</id>
        <label>ZNF18</label>
    </interactant>
    <organismsDiffer>false</organismsDiffer>
    <experiments>3</experiments>
</comment>
<comment type="interaction">
    <interactant intactId="EBI-740232">
        <id>Q9NWS9-2</id>
    </interactant>
    <interactant intactId="EBI-749023">
        <id>Q9UNY5</id>
        <label>ZNF232</label>
    </interactant>
    <organismsDiffer>false</organismsDiffer>
    <experiments>7</experiments>
</comment>
<comment type="interaction">
    <interactant intactId="EBI-740232">
        <id>Q9NWS9-2</id>
    </interactant>
    <interactant intactId="EBI-707773">
        <id>P17028</id>
        <label>ZNF24</label>
    </interactant>
    <organismsDiffer>false</organismsDiffer>
    <experiments>13</experiments>
</comment>
<comment type="interaction">
    <interactant intactId="EBI-740232">
        <id>Q9NWS9-2</id>
    </interactant>
    <interactant intactId="EBI-12328453">
        <id>Q96N95-3</id>
        <label>ZNF396</label>
    </interactant>
    <organismsDiffer>false</organismsDiffer>
    <experiments>3</experiments>
</comment>
<comment type="interaction">
    <interactant intactId="EBI-740232">
        <id>Q9NWS9-2</id>
    </interactant>
    <interactant intactId="EBI-10213894">
        <id>Q8NF99</id>
        <label>ZNF397</label>
    </interactant>
    <organismsDiffer>false</organismsDiffer>
    <experiments>5</experiments>
</comment>
<comment type="interaction">
    <interactant intactId="EBI-740232">
        <id>Q9NWS9-2</id>
    </interactant>
    <interactant intactId="EBI-11524467">
        <id>Q8NF99-2</id>
        <label>ZNF397</label>
    </interactant>
    <organismsDiffer>false</organismsDiffer>
    <experiments>5</experiments>
</comment>
<comment type="interaction">
    <interactant intactId="EBI-740232">
        <id>Q9NWS9-2</id>
    </interactant>
    <interactant intactId="EBI-740232">
        <id>Q9NWS9-2</id>
        <label>ZNF446</label>
    </interactant>
    <organismsDiffer>false</organismsDiffer>
    <experiments>4</experiments>
</comment>
<comment type="interaction">
    <interactant intactId="EBI-740232">
        <id>Q9NWS9-2</id>
    </interactant>
    <interactant intactId="EBI-10196963">
        <id>Q6P088</id>
        <label>ZNF483</label>
    </interactant>
    <organismsDiffer>false</organismsDiffer>
    <experiments>4</experiments>
</comment>
<comment type="interaction">
    <interactant intactId="EBI-740232">
        <id>Q9NWS9-2</id>
    </interactant>
    <interactant intactId="EBI-743906">
        <id>Q96IT1</id>
        <label>ZNF496</label>
    </interactant>
    <organismsDiffer>false</organismsDiffer>
    <experiments>7</experiments>
</comment>
<comment type="interaction">
    <interactant intactId="EBI-740232">
        <id>Q9NWS9-2</id>
    </interactant>
    <interactant intactId="EBI-1210440">
        <id>O43309</id>
        <label>ZSCAN12</label>
    </interactant>
    <organismsDiffer>false</organismsDiffer>
    <experiments>7</experiments>
</comment>
<comment type="interaction">
    <interactant intactId="EBI-740232">
        <id>Q9NWS9-2</id>
    </interactant>
    <interactant intactId="EBI-723596">
        <id>Q9H4T2</id>
        <label>ZSCAN16</label>
    </interactant>
    <organismsDiffer>false</organismsDiffer>
    <experiments>10</experiments>
</comment>
<comment type="interaction">
    <interactant intactId="EBI-740232">
        <id>Q9NWS9-2</id>
    </interactant>
    <interactant intactId="EBI-3919096">
        <id>Q8TBC5</id>
        <label>ZSCAN18</label>
    </interactant>
    <organismsDiffer>false</organismsDiffer>
    <experiments>3</experiments>
</comment>
<comment type="interaction">
    <interactant intactId="EBI-740232">
        <id>Q9NWS9-2</id>
    </interactant>
    <interactant intactId="EBI-10281938">
        <id>Q9Y5A6</id>
        <label>ZSCAN21</label>
    </interactant>
    <organismsDiffer>false</organismsDiffer>
    <experiments>8</experiments>
</comment>
<comment type="interaction">
    <interactant intactId="EBI-740232">
        <id>Q9NWS9-2</id>
    </interactant>
    <interactant intactId="EBI-10178224">
        <id>P10073</id>
        <label>ZSCAN22</label>
    </interactant>
    <organismsDiffer>false</organismsDiffer>
    <experiments>8</experiments>
</comment>
<comment type="interaction">
    <interactant intactId="EBI-740232">
        <id>Q9NWS9-2</id>
    </interactant>
    <interactant intactId="EBI-5667532">
        <id>Q3MJ62</id>
        <label>ZSCAN23</label>
    </interactant>
    <organismsDiffer>false</organismsDiffer>
    <experiments>5</experiments>
</comment>
<comment type="interaction">
    <interactant intactId="EBI-740232">
        <id>Q9NWS9-2</id>
    </interactant>
    <interactant intactId="EBI-14188237">
        <id>Q8IWY8-3</id>
        <label>ZSCAN29</label>
    </interactant>
    <organismsDiffer>false</organismsDiffer>
    <experiments>3</experiments>
</comment>
<comment type="interaction">
    <interactant intactId="EBI-740232">
        <id>Q9NWS9-2</id>
    </interactant>
    <interactant intactId="EBI-11793064">
        <id>Q86W11</id>
        <label>ZSCAN30</label>
    </interactant>
    <organismsDiffer>false</organismsDiffer>
    <experiments>3</experiments>
</comment>
<comment type="interaction">
    <interactant intactId="EBI-740232">
        <id>Q9NWS9-2</id>
    </interactant>
    <interactant intactId="EBI-739949">
        <id>Q9NX65</id>
        <label>ZSCAN32</label>
    </interactant>
    <organismsDiffer>false</organismsDiffer>
    <experiments>4</experiments>
</comment>
<comment type="interaction">
    <interactant intactId="EBI-740232">
        <id>Q9NWS9-2</id>
    </interactant>
    <interactant intactId="EBI-751531">
        <id>O15535</id>
        <label>ZSCAN9</label>
    </interactant>
    <organismsDiffer>false</organismsDiffer>
    <experiments>9</experiments>
</comment>
<comment type="subcellular location">
    <subcellularLocation>
        <location evidence="2">Nucleus</location>
    </subcellularLocation>
</comment>
<comment type="alternative products">
    <event type="alternative splicing"/>
    <isoform>
        <id>Q9NWS9-1</id>
        <name>1</name>
        <sequence type="displayed"/>
    </isoform>
    <isoform>
        <id>Q9NWS9-2</id>
        <name>2</name>
        <sequence type="described" ref="VSP_058945"/>
    </isoform>
</comment>
<comment type="similarity">
    <text evidence="5">Belongs to the krueppel C2H2-type zinc-finger protein family.</text>
</comment>
<dbReference type="EMBL" id="AK000633">
    <property type="protein sequence ID" value="BAA91298.1"/>
    <property type="molecule type" value="mRNA"/>
</dbReference>
<dbReference type="EMBL" id="AY280800">
    <property type="protein sequence ID" value="AAQ16304.1"/>
    <property type="molecule type" value="mRNA"/>
</dbReference>
<dbReference type="EMBL" id="BC017206">
    <property type="protein sequence ID" value="AAH17206.1"/>
    <property type="molecule type" value="mRNA"/>
</dbReference>
<dbReference type="CCDS" id="CCDS12982.1">
    <molecule id="Q9NWS9-1"/>
</dbReference>
<dbReference type="RefSeq" id="NP_060378.1">
    <molecule id="Q9NWS9-1"/>
    <property type="nucleotide sequence ID" value="NM_017908.4"/>
</dbReference>
<dbReference type="RefSeq" id="XP_005259109.1">
    <property type="nucleotide sequence ID" value="XM_005259052.4"/>
</dbReference>
<dbReference type="SMR" id="Q9NWS9"/>
<dbReference type="BioGRID" id="120795">
    <property type="interactions" value="91"/>
</dbReference>
<dbReference type="FunCoup" id="Q9NWS9">
    <property type="interactions" value="301"/>
</dbReference>
<dbReference type="IntAct" id="Q9NWS9">
    <property type="interactions" value="99"/>
</dbReference>
<dbReference type="STRING" id="9606.ENSP00000472802"/>
<dbReference type="GlyGen" id="Q9NWS9">
    <property type="glycosylation" value="3 sites"/>
</dbReference>
<dbReference type="iPTMnet" id="Q9NWS9"/>
<dbReference type="PhosphoSitePlus" id="Q9NWS9"/>
<dbReference type="BioMuta" id="ZNF446"/>
<dbReference type="DMDM" id="55976772"/>
<dbReference type="jPOST" id="Q9NWS9"/>
<dbReference type="MassIVE" id="Q9NWS9"/>
<dbReference type="PaxDb" id="9606-ENSP00000472802"/>
<dbReference type="PeptideAtlas" id="Q9NWS9"/>
<dbReference type="ProteomicsDB" id="82976"/>
<dbReference type="ABCD" id="Q9NWS9">
    <property type="antibodies" value="6 sequenced antibodies"/>
</dbReference>
<dbReference type="Antibodypedia" id="19695">
    <property type="antibodies" value="122 antibodies from 26 providers"/>
</dbReference>
<dbReference type="DNASU" id="55663"/>
<dbReference type="Ensembl" id="ENST00000594369.6">
    <molecule id="Q9NWS9-1"/>
    <property type="protein sequence ID" value="ENSP00000472802.1"/>
    <property type="gene ID" value="ENSG00000083838.17"/>
</dbReference>
<dbReference type="Ensembl" id="ENST00000610298.1">
    <molecule id="Q9NWS9-2"/>
    <property type="protein sequence ID" value="ENSP00000478778.1"/>
    <property type="gene ID" value="ENSG00000083838.17"/>
</dbReference>
<dbReference type="GeneID" id="55663"/>
<dbReference type="KEGG" id="hsa:55663"/>
<dbReference type="MANE-Select" id="ENST00000594369.6">
    <property type="protein sequence ID" value="ENSP00000472802.1"/>
    <property type="RefSeq nucleotide sequence ID" value="NM_017908.4"/>
    <property type="RefSeq protein sequence ID" value="NP_060378.1"/>
</dbReference>
<dbReference type="UCSC" id="uc002qsz.4">
    <molecule id="Q9NWS9-1"/>
    <property type="organism name" value="human"/>
</dbReference>
<dbReference type="AGR" id="HGNC:21036"/>
<dbReference type="CTD" id="55663"/>
<dbReference type="DisGeNET" id="55663"/>
<dbReference type="GeneCards" id="ZNF446"/>
<dbReference type="HGNC" id="HGNC:21036">
    <property type="gene designation" value="ZNF446"/>
</dbReference>
<dbReference type="HPA" id="ENSG00000083838">
    <property type="expression patterns" value="Low tissue specificity"/>
</dbReference>
<dbReference type="neXtProt" id="NX_Q9NWS9"/>
<dbReference type="OpenTargets" id="ENSG00000083838"/>
<dbReference type="PharmGKB" id="PA134863395"/>
<dbReference type="VEuPathDB" id="HostDB:ENSG00000083838"/>
<dbReference type="eggNOG" id="KOG1721">
    <property type="taxonomic scope" value="Eukaryota"/>
</dbReference>
<dbReference type="GeneTree" id="ENSGT00940000162092"/>
<dbReference type="InParanoid" id="Q9NWS9"/>
<dbReference type="OMA" id="DTQMERS"/>
<dbReference type="OrthoDB" id="6077919at2759"/>
<dbReference type="PAN-GO" id="Q9NWS9">
    <property type="GO annotations" value="3 GO annotations based on evolutionary models"/>
</dbReference>
<dbReference type="PhylomeDB" id="Q9NWS9"/>
<dbReference type="TreeFam" id="TF337489"/>
<dbReference type="PathwayCommons" id="Q9NWS9"/>
<dbReference type="Reactome" id="R-HSA-212436">
    <property type="pathway name" value="Generic Transcription Pathway"/>
</dbReference>
<dbReference type="SignaLink" id="Q9NWS9"/>
<dbReference type="BioGRID-ORCS" id="55663">
    <property type="hits" value="17 hits in 1177 CRISPR screens"/>
</dbReference>
<dbReference type="ChiTaRS" id="ZNF446">
    <property type="organism name" value="human"/>
</dbReference>
<dbReference type="GenomeRNAi" id="55663"/>
<dbReference type="Pharos" id="Q9NWS9">
    <property type="development level" value="Tdark"/>
</dbReference>
<dbReference type="PRO" id="PR:Q9NWS9"/>
<dbReference type="Proteomes" id="UP000005640">
    <property type="component" value="Chromosome 19"/>
</dbReference>
<dbReference type="RNAct" id="Q9NWS9">
    <property type="molecule type" value="protein"/>
</dbReference>
<dbReference type="Bgee" id="ENSG00000083838">
    <property type="expression patterns" value="Expressed in right uterine tube and 115 other cell types or tissues"/>
</dbReference>
<dbReference type="ExpressionAtlas" id="Q9NWS9">
    <property type="expression patterns" value="baseline and differential"/>
</dbReference>
<dbReference type="GO" id="GO:0000785">
    <property type="term" value="C:chromatin"/>
    <property type="evidence" value="ECO:0000247"/>
    <property type="project" value="NTNU_SB"/>
</dbReference>
<dbReference type="GO" id="GO:0005615">
    <property type="term" value="C:extracellular space"/>
    <property type="evidence" value="ECO:0007005"/>
    <property type="project" value="UniProtKB"/>
</dbReference>
<dbReference type="GO" id="GO:0005634">
    <property type="term" value="C:nucleus"/>
    <property type="evidence" value="ECO:0007669"/>
    <property type="project" value="UniProtKB-SubCell"/>
</dbReference>
<dbReference type="GO" id="GO:0000981">
    <property type="term" value="F:DNA-binding transcription factor activity, RNA polymerase II-specific"/>
    <property type="evidence" value="ECO:0000247"/>
    <property type="project" value="NTNU_SB"/>
</dbReference>
<dbReference type="GO" id="GO:0042802">
    <property type="term" value="F:identical protein binding"/>
    <property type="evidence" value="ECO:0000353"/>
    <property type="project" value="IntAct"/>
</dbReference>
<dbReference type="GO" id="GO:0000978">
    <property type="term" value="F:RNA polymerase II cis-regulatory region sequence-specific DNA binding"/>
    <property type="evidence" value="ECO:0000318"/>
    <property type="project" value="GO_Central"/>
</dbReference>
<dbReference type="GO" id="GO:0008270">
    <property type="term" value="F:zinc ion binding"/>
    <property type="evidence" value="ECO:0007669"/>
    <property type="project" value="UniProtKB-KW"/>
</dbReference>
<dbReference type="GO" id="GO:0006357">
    <property type="term" value="P:regulation of transcription by RNA polymerase II"/>
    <property type="evidence" value="ECO:0000318"/>
    <property type="project" value="GO_Central"/>
</dbReference>
<dbReference type="CDD" id="cd07765">
    <property type="entry name" value="KRAB_A-box"/>
    <property type="match status" value="1"/>
</dbReference>
<dbReference type="CDD" id="cd07936">
    <property type="entry name" value="SCAN"/>
    <property type="match status" value="1"/>
</dbReference>
<dbReference type="FunFam" id="3.30.160.60:FF:000322">
    <property type="entry name" value="GDNF-inducible zinc finger protein 1"/>
    <property type="match status" value="1"/>
</dbReference>
<dbReference type="FunFam" id="1.10.4020.10:FF:000001">
    <property type="entry name" value="zinc finger protein 263 isoform X1"/>
    <property type="match status" value="1"/>
</dbReference>
<dbReference type="FunFam" id="3.30.160.60:FF:001246">
    <property type="entry name" value="Zinc finger protein 446"/>
    <property type="match status" value="1"/>
</dbReference>
<dbReference type="FunFam" id="3.30.160.60:FF:001613">
    <property type="entry name" value="Zinc finger protein 446"/>
    <property type="match status" value="1"/>
</dbReference>
<dbReference type="Gene3D" id="6.10.140.140">
    <property type="match status" value="1"/>
</dbReference>
<dbReference type="Gene3D" id="3.30.160.60">
    <property type="entry name" value="Classic Zinc Finger"/>
    <property type="match status" value="3"/>
</dbReference>
<dbReference type="Gene3D" id="1.10.4020.10">
    <property type="entry name" value="DNA breaking-rejoining enzymes"/>
    <property type="match status" value="1"/>
</dbReference>
<dbReference type="InterPro" id="IPR001909">
    <property type="entry name" value="KRAB"/>
</dbReference>
<dbReference type="InterPro" id="IPR036051">
    <property type="entry name" value="KRAB_dom_sf"/>
</dbReference>
<dbReference type="InterPro" id="IPR050916">
    <property type="entry name" value="SCAN-C2H2_zinc_finger"/>
</dbReference>
<dbReference type="InterPro" id="IPR003309">
    <property type="entry name" value="SCAN_dom"/>
</dbReference>
<dbReference type="InterPro" id="IPR038269">
    <property type="entry name" value="SCAN_sf"/>
</dbReference>
<dbReference type="InterPro" id="IPR036236">
    <property type="entry name" value="Znf_C2H2_sf"/>
</dbReference>
<dbReference type="InterPro" id="IPR013087">
    <property type="entry name" value="Znf_C2H2_type"/>
</dbReference>
<dbReference type="PANTHER" id="PTHR45935">
    <property type="entry name" value="PROTEIN ZBED8-RELATED"/>
    <property type="match status" value="1"/>
</dbReference>
<dbReference type="PANTHER" id="PTHR45935:SF27">
    <property type="entry name" value="ZINC FINGER PROTEIN 446"/>
    <property type="match status" value="1"/>
</dbReference>
<dbReference type="Pfam" id="PF01352">
    <property type="entry name" value="KRAB"/>
    <property type="match status" value="1"/>
</dbReference>
<dbReference type="Pfam" id="PF02023">
    <property type="entry name" value="SCAN"/>
    <property type="match status" value="1"/>
</dbReference>
<dbReference type="Pfam" id="PF00096">
    <property type="entry name" value="zf-C2H2"/>
    <property type="match status" value="1"/>
</dbReference>
<dbReference type="SMART" id="SM00349">
    <property type="entry name" value="KRAB"/>
    <property type="match status" value="1"/>
</dbReference>
<dbReference type="SMART" id="SM00431">
    <property type="entry name" value="SCAN"/>
    <property type="match status" value="1"/>
</dbReference>
<dbReference type="SMART" id="SM00355">
    <property type="entry name" value="ZnF_C2H2"/>
    <property type="match status" value="3"/>
</dbReference>
<dbReference type="SUPFAM" id="SSF57667">
    <property type="entry name" value="beta-beta-alpha zinc fingers"/>
    <property type="match status" value="2"/>
</dbReference>
<dbReference type="SUPFAM" id="SSF109640">
    <property type="entry name" value="KRAB domain (Kruppel-associated box)"/>
    <property type="match status" value="1"/>
</dbReference>
<dbReference type="SUPFAM" id="SSF47353">
    <property type="entry name" value="Retrovirus capsid dimerization domain-like"/>
    <property type="match status" value="1"/>
</dbReference>
<dbReference type="PROSITE" id="PS50804">
    <property type="entry name" value="SCAN_BOX"/>
    <property type="match status" value="1"/>
</dbReference>
<dbReference type="PROSITE" id="PS00028">
    <property type="entry name" value="ZINC_FINGER_C2H2_1"/>
    <property type="match status" value="3"/>
</dbReference>
<dbReference type="PROSITE" id="PS50157">
    <property type="entry name" value="ZINC_FINGER_C2H2_2"/>
    <property type="match status" value="3"/>
</dbReference>
<accession>Q9NWS9</accession>
<accession>Q96AF5</accession>
<feature type="chain" id="PRO_0000047596" description="Zinc finger protein 446">
    <location>
        <begin position="1"/>
        <end position="450"/>
    </location>
</feature>
<feature type="domain" description="SCAN box" evidence="2">
    <location>
        <begin position="26"/>
        <end position="108"/>
    </location>
</feature>
<feature type="domain" description="KRAB">
    <location>
        <begin position="208"/>
        <end position="254"/>
    </location>
</feature>
<feature type="zinc finger region" description="C2H2-type 1" evidence="1">
    <location>
        <begin position="332"/>
        <end position="359"/>
    </location>
</feature>
<feature type="zinc finger region" description="C2H2-type 2" evidence="1">
    <location>
        <begin position="395"/>
        <end position="422"/>
    </location>
</feature>
<feature type="zinc finger region" description="C2H2-type 3" evidence="1">
    <location>
        <begin position="423"/>
        <end position="450"/>
    </location>
</feature>
<feature type="region of interest" description="Disordered" evidence="3">
    <location>
        <begin position="130"/>
        <end position="155"/>
    </location>
</feature>
<feature type="region of interest" description="Disordered" evidence="3">
    <location>
        <begin position="168"/>
        <end position="205"/>
    </location>
</feature>
<feature type="region of interest" description="Disordered" evidence="3">
    <location>
        <begin position="263"/>
        <end position="331"/>
    </location>
</feature>
<feature type="region of interest" description="Disordered" evidence="3">
    <location>
        <begin position="354"/>
        <end position="389"/>
    </location>
</feature>
<feature type="compositionally biased region" description="Pro residues" evidence="3">
    <location>
        <begin position="275"/>
        <end position="286"/>
    </location>
</feature>
<feature type="compositionally biased region" description="Low complexity" evidence="3">
    <location>
        <begin position="287"/>
        <end position="306"/>
    </location>
</feature>
<feature type="modified residue" description="Phosphoserine" evidence="6 7 8 9">
    <location>
        <position position="137"/>
    </location>
</feature>
<feature type="modified residue" description="Phosphoserine" evidence="8">
    <location>
        <position position="218"/>
    </location>
</feature>
<feature type="modified residue" description="Phosphothreonine" evidence="9">
    <location>
        <position position="308"/>
    </location>
</feature>
<feature type="cross-link" description="Glycyl lysine isopeptide (Lys-Gly) (interchain with G-Cter in SUMO2)" evidence="10">
    <location>
        <position position="130"/>
    </location>
</feature>
<feature type="cross-link" description="Glycyl lysine isopeptide (Lys-Gly) (interchain with G-Cter in SUMO2)" evidence="10">
    <location>
        <position position="330"/>
    </location>
</feature>
<feature type="splice variant" id="VSP_058945" description="In isoform 2.">
    <location>
        <begin position="417"/>
        <end position="444"/>
    </location>
</feature>
<feature type="sequence variant" id="VAR_033566" description="In dbSNP:rs893185." evidence="4">
    <original>N</original>
    <variation>H</variation>
    <location>
        <position position="192"/>
    </location>
</feature>
<feature type="sequence variant" id="VAR_033567" description="In dbSNP:rs36095067.">
    <original>P</original>
    <variation>S</variation>
    <location>
        <position position="300"/>
    </location>
</feature>
<feature type="sequence variant" id="VAR_052833" description="In dbSNP:rs882610." evidence="4">
    <original>R</original>
    <variation>H</variation>
    <location>
        <position position="387"/>
    </location>
</feature>
<protein>
    <recommendedName>
        <fullName>Zinc finger protein 446</fullName>
    </recommendedName>
    <alternativeName>
        <fullName>Zinc finger protein with KRAB and SCAN domains 20</fullName>
    </alternativeName>
</protein>